<sequence length="227" mass="24321">MALPTKSSILDLSSGTPCTRSPEESHEAWAQCKDAGRQLPEYKAVVVGASGVGKSALTIQMTHQCFVKDHDPTIQDSYWKEVARDNGGYILNVLDTSGQDIHRALRDQCLASGDGVLGVFALDDPSSLDQLQQIWSTWTPHHKQPLVLVGNKCDLVTTAGDAHAAAALLAHKLGAPLVKTSAKTRQGVEEAFALLVHEIQRAQEAVAESSKKTRHQKAVCSCGCSVA</sequence>
<gene>
    <name type="primary">Eras</name>
</gene>
<reference key="1">
    <citation type="journal article" date="2003" name="Nature">
        <title>Role of Eras in promoting tumor-like properties in mouse embryonic stem cells.</title>
        <authorList>
            <person name="Takahashi K."/>
            <person name="Mitsui K."/>
            <person name="Yamanaka S."/>
        </authorList>
    </citation>
    <scope>NUCLEOTIDE SEQUENCE [MRNA]</scope>
    <scope>FUNCTION</scope>
    <scope>TISSUE SPECIFICITY</scope>
    <scope>INTERACTION WITH PIK3CD</scope>
</reference>
<reference key="2">
    <citation type="journal article" date="2005" name="Science">
        <title>The transcriptional landscape of the mammalian genome.</title>
        <authorList>
            <person name="Carninci P."/>
            <person name="Kasukawa T."/>
            <person name="Katayama S."/>
            <person name="Gough J."/>
            <person name="Frith M.C."/>
            <person name="Maeda N."/>
            <person name="Oyama R."/>
            <person name="Ravasi T."/>
            <person name="Lenhard B."/>
            <person name="Wells C."/>
            <person name="Kodzius R."/>
            <person name="Shimokawa K."/>
            <person name="Bajic V.B."/>
            <person name="Brenner S.E."/>
            <person name="Batalov S."/>
            <person name="Forrest A.R."/>
            <person name="Zavolan M."/>
            <person name="Davis M.J."/>
            <person name="Wilming L.G."/>
            <person name="Aidinis V."/>
            <person name="Allen J.E."/>
            <person name="Ambesi-Impiombato A."/>
            <person name="Apweiler R."/>
            <person name="Aturaliya R.N."/>
            <person name="Bailey T.L."/>
            <person name="Bansal M."/>
            <person name="Baxter L."/>
            <person name="Beisel K.W."/>
            <person name="Bersano T."/>
            <person name="Bono H."/>
            <person name="Chalk A.M."/>
            <person name="Chiu K.P."/>
            <person name="Choudhary V."/>
            <person name="Christoffels A."/>
            <person name="Clutterbuck D.R."/>
            <person name="Crowe M.L."/>
            <person name="Dalla E."/>
            <person name="Dalrymple B.P."/>
            <person name="de Bono B."/>
            <person name="Della Gatta G."/>
            <person name="di Bernardo D."/>
            <person name="Down T."/>
            <person name="Engstrom P."/>
            <person name="Fagiolini M."/>
            <person name="Faulkner G."/>
            <person name="Fletcher C.F."/>
            <person name="Fukushima T."/>
            <person name="Furuno M."/>
            <person name="Futaki S."/>
            <person name="Gariboldi M."/>
            <person name="Georgii-Hemming P."/>
            <person name="Gingeras T.R."/>
            <person name="Gojobori T."/>
            <person name="Green R.E."/>
            <person name="Gustincich S."/>
            <person name="Harbers M."/>
            <person name="Hayashi Y."/>
            <person name="Hensch T.K."/>
            <person name="Hirokawa N."/>
            <person name="Hill D."/>
            <person name="Huminiecki L."/>
            <person name="Iacono M."/>
            <person name="Ikeo K."/>
            <person name="Iwama A."/>
            <person name="Ishikawa T."/>
            <person name="Jakt M."/>
            <person name="Kanapin A."/>
            <person name="Katoh M."/>
            <person name="Kawasawa Y."/>
            <person name="Kelso J."/>
            <person name="Kitamura H."/>
            <person name="Kitano H."/>
            <person name="Kollias G."/>
            <person name="Krishnan S.P."/>
            <person name="Kruger A."/>
            <person name="Kummerfeld S.K."/>
            <person name="Kurochkin I.V."/>
            <person name="Lareau L.F."/>
            <person name="Lazarevic D."/>
            <person name="Lipovich L."/>
            <person name="Liu J."/>
            <person name="Liuni S."/>
            <person name="McWilliam S."/>
            <person name="Madan Babu M."/>
            <person name="Madera M."/>
            <person name="Marchionni L."/>
            <person name="Matsuda H."/>
            <person name="Matsuzawa S."/>
            <person name="Miki H."/>
            <person name="Mignone F."/>
            <person name="Miyake S."/>
            <person name="Morris K."/>
            <person name="Mottagui-Tabar S."/>
            <person name="Mulder N."/>
            <person name="Nakano N."/>
            <person name="Nakauchi H."/>
            <person name="Ng P."/>
            <person name="Nilsson R."/>
            <person name="Nishiguchi S."/>
            <person name="Nishikawa S."/>
            <person name="Nori F."/>
            <person name="Ohara O."/>
            <person name="Okazaki Y."/>
            <person name="Orlando V."/>
            <person name="Pang K.C."/>
            <person name="Pavan W.J."/>
            <person name="Pavesi G."/>
            <person name="Pesole G."/>
            <person name="Petrovsky N."/>
            <person name="Piazza S."/>
            <person name="Reed J."/>
            <person name="Reid J.F."/>
            <person name="Ring B.Z."/>
            <person name="Ringwald M."/>
            <person name="Rost B."/>
            <person name="Ruan Y."/>
            <person name="Salzberg S.L."/>
            <person name="Sandelin A."/>
            <person name="Schneider C."/>
            <person name="Schoenbach C."/>
            <person name="Sekiguchi K."/>
            <person name="Semple C.A."/>
            <person name="Seno S."/>
            <person name="Sessa L."/>
            <person name="Sheng Y."/>
            <person name="Shibata Y."/>
            <person name="Shimada H."/>
            <person name="Shimada K."/>
            <person name="Silva D."/>
            <person name="Sinclair B."/>
            <person name="Sperling S."/>
            <person name="Stupka E."/>
            <person name="Sugiura K."/>
            <person name="Sultana R."/>
            <person name="Takenaka Y."/>
            <person name="Taki K."/>
            <person name="Tammoja K."/>
            <person name="Tan S.L."/>
            <person name="Tang S."/>
            <person name="Taylor M.S."/>
            <person name="Tegner J."/>
            <person name="Teichmann S.A."/>
            <person name="Ueda H.R."/>
            <person name="van Nimwegen E."/>
            <person name="Verardo R."/>
            <person name="Wei C.L."/>
            <person name="Yagi K."/>
            <person name="Yamanishi H."/>
            <person name="Zabarovsky E."/>
            <person name="Zhu S."/>
            <person name="Zimmer A."/>
            <person name="Hide W."/>
            <person name="Bult C."/>
            <person name="Grimmond S.M."/>
            <person name="Teasdale R.D."/>
            <person name="Liu E.T."/>
            <person name="Brusic V."/>
            <person name="Quackenbush J."/>
            <person name="Wahlestedt C."/>
            <person name="Mattick J.S."/>
            <person name="Hume D.A."/>
            <person name="Kai C."/>
            <person name="Sasaki D."/>
            <person name="Tomaru Y."/>
            <person name="Fukuda S."/>
            <person name="Kanamori-Katayama M."/>
            <person name="Suzuki M."/>
            <person name="Aoki J."/>
            <person name="Arakawa T."/>
            <person name="Iida J."/>
            <person name="Imamura K."/>
            <person name="Itoh M."/>
            <person name="Kato T."/>
            <person name="Kawaji H."/>
            <person name="Kawagashira N."/>
            <person name="Kawashima T."/>
            <person name="Kojima M."/>
            <person name="Kondo S."/>
            <person name="Konno H."/>
            <person name="Nakano K."/>
            <person name="Ninomiya N."/>
            <person name="Nishio T."/>
            <person name="Okada M."/>
            <person name="Plessy C."/>
            <person name="Shibata K."/>
            <person name="Shiraki T."/>
            <person name="Suzuki S."/>
            <person name="Tagami M."/>
            <person name="Waki K."/>
            <person name="Watahiki A."/>
            <person name="Okamura-Oho Y."/>
            <person name="Suzuki H."/>
            <person name="Kawai J."/>
            <person name="Hayashizaki Y."/>
        </authorList>
    </citation>
    <scope>NUCLEOTIDE SEQUENCE [LARGE SCALE MRNA]</scope>
    <source>
        <strain>C57BL/6J</strain>
    </source>
</reference>
<accession>Q7TN89</accession>
<proteinExistence type="evidence at protein level"/>
<dbReference type="EC" id="3.6.5.2" evidence="2"/>
<dbReference type="EMBL" id="AB093573">
    <property type="protein sequence ID" value="BAC76996.1"/>
    <property type="molecule type" value="mRNA"/>
</dbReference>
<dbReference type="EMBL" id="AK141212">
    <property type="protein sequence ID" value="BAE24591.1"/>
    <property type="molecule type" value="mRNA"/>
</dbReference>
<dbReference type="CCDS" id="CCDS29980.1"/>
<dbReference type="RefSeq" id="NP_853526.1">
    <property type="nucleotide sequence ID" value="NM_181548.2"/>
</dbReference>
<dbReference type="SMR" id="Q7TN89"/>
<dbReference type="BioGRID" id="237281">
    <property type="interactions" value="1"/>
</dbReference>
<dbReference type="CORUM" id="Q7TN89"/>
<dbReference type="FunCoup" id="Q7TN89">
    <property type="interactions" value="411"/>
</dbReference>
<dbReference type="STRING" id="10090.ENSMUSP00000033500"/>
<dbReference type="iPTMnet" id="Q7TN89"/>
<dbReference type="PhosphoSitePlus" id="Q7TN89"/>
<dbReference type="PaxDb" id="10090-ENSMUSP00000033500"/>
<dbReference type="ProteomicsDB" id="254986"/>
<dbReference type="Antibodypedia" id="25880">
    <property type="antibodies" value="419 antibodies from 31 providers"/>
</dbReference>
<dbReference type="DNASU" id="353283"/>
<dbReference type="Ensembl" id="ENSMUST00000033500.5">
    <property type="protein sequence ID" value="ENSMUSP00000033500.5"/>
    <property type="gene ID" value="ENSMUSG00000031160.5"/>
</dbReference>
<dbReference type="GeneID" id="353283"/>
<dbReference type="KEGG" id="mmu:353283"/>
<dbReference type="UCSC" id="uc009sng.1">
    <property type="organism name" value="mouse"/>
</dbReference>
<dbReference type="AGR" id="MGI:2665023"/>
<dbReference type="CTD" id="3266"/>
<dbReference type="MGI" id="MGI:2665023">
    <property type="gene designation" value="Eras"/>
</dbReference>
<dbReference type="VEuPathDB" id="HostDB:ENSMUSG00000031160"/>
<dbReference type="eggNOG" id="KOG0395">
    <property type="taxonomic scope" value="Eukaryota"/>
</dbReference>
<dbReference type="GeneTree" id="ENSGT00940000162901"/>
<dbReference type="HOGENOM" id="CLU_041217_9_8_1"/>
<dbReference type="InParanoid" id="Q7TN89"/>
<dbReference type="OMA" id="KAMCRCG"/>
<dbReference type="OrthoDB" id="9835289at2759"/>
<dbReference type="PhylomeDB" id="Q7TN89"/>
<dbReference type="TreeFam" id="TF312796"/>
<dbReference type="BioGRID-ORCS" id="353283">
    <property type="hits" value="4 hits in 77 CRISPR screens"/>
</dbReference>
<dbReference type="PRO" id="PR:Q7TN89"/>
<dbReference type="Proteomes" id="UP000000589">
    <property type="component" value="Chromosome X"/>
</dbReference>
<dbReference type="RNAct" id="Q7TN89">
    <property type="molecule type" value="protein"/>
</dbReference>
<dbReference type="Bgee" id="ENSMUSG00000031160">
    <property type="expression patterns" value="Expressed in interventricular septum and 20 other cell types or tissues"/>
</dbReference>
<dbReference type="ExpressionAtlas" id="Q7TN89">
    <property type="expression patterns" value="baseline and differential"/>
</dbReference>
<dbReference type="GO" id="GO:0005886">
    <property type="term" value="C:plasma membrane"/>
    <property type="evidence" value="ECO:0007669"/>
    <property type="project" value="UniProtKB-SubCell"/>
</dbReference>
<dbReference type="GO" id="GO:0003925">
    <property type="term" value="F:G protein activity"/>
    <property type="evidence" value="ECO:0007669"/>
    <property type="project" value="UniProtKB-EC"/>
</dbReference>
<dbReference type="GO" id="GO:0005525">
    <property type="term" value="F:GTP binding"/>
    <property type="evidence" value="ECO:0007669"/>
    <property type="project" value="UniProtKB-KW"/>
</dbReference>
<dbReference type="GO" id="GO:0007165">
    <property type="term" value="P:signal transduction"/>
    <property type="evidence" value="ECO:0007669"/>
    <property type="project" value="InterPro"/>
</dbReference>
<dbReference type="FunFam" id="3.40.50.300:FF:000343">
    <property type="entry name" value="Ras family gtpase"/>
    <property type="match status" value="1"/>
</dbReference>
<dbReference type="Gene3D" id="3.40.50.300">
    <property type="entry name" value="P-loop containing nucleotide triphosphate hydrolases"/>
    <property type="match status" value="1"/>
</dbReference>
<dbReference type="InterPro" id="IPR027417">
    <property type="entry name" value="P-loop_NTPase"/>
</dbReference>
<dbReference type="InterPro" id="IPR005225">
    <property type="entry name" value="Small_GTP-bd"/>
</dbReference>
<dbReference type="InterPro" id="IPR001806">
    <property type="entry name" value="Small_GTPase"/>
</dbReference>
<dbReference type="InterPro" id="IPR020849">
    <property type="entry name" value="Small_GTPase_Ras-type"/>
</dbReference>
<dbReference type="NCBIfam" id="TIGR00231">
    <property type="entry name" value="small_GTP"/>
    <property type="match status" value="1"/>
</dbReference>
<dbReference type="PANTHER" id="PTHR24070">
    <property type="entry name" value="RAS, DI-RAS, AND RHEB FAMILY MEMBERS OF SMALL GTPASE SUPERFAMILY"/>
    <property type="match status" value="1"/>
</dbReference>
<dbReference type="Pfam" id="PF00071">
    <property type="entry name" value="Ras"/>
    <property type="match status" value="1"/>
</dbReference>
<dbReference type="PRINTS" id="PR00449">
    <property type="entry name" value="RASTRNSFRMNG"/>
</dbReference>
<dbReference type="SMART" id="SM00175">
    <property type="entry name" value="RAB"/>
    <property type="match status" value="1"/>
</dbReference>
<dbReference type="SMART" id="SM00173">
    <property type="entry name" value="RAS"/>
    <property type="match status" value="1"/>
</dbReference>
<dbReference type="SMART" id="SM00174">
    <property type="entry name" value="RHO"/>
    <property type="match status" value="1"/>
</dbReference>
<dbReference type="SUPFAM" id="SSF52540">
    <property type="entry name" value="P-loop containing nucleoside triphosphate hydrolases"/>
    <property type="match status" value="1"/>
</dbReference>
<dbReference type="PROSITE" id="PS51421">
    <property type="entry name" value="RAS"/>
    <property type="match status" value="1"/>
</dbReference>
<evidence type="ECO:0000250" key="1"/>
<evidence type="ECO:0000250" key="2">
    <source>
        <dbReference type="UniProtKB" id="P01116"/>
    </source>
</evidence>
<evidence type="ECO:0000256" key="3">
    <source>
        <dbReference type="SAM" id="MobiDB-lite"/>
    </source>
</evidence>
<evidence type="ECO:0000269" key="4">
    <source>
    </source>
</evidence>
<evidence type="ECO:0000305" key="5"/>
<organism>
    <name type="scientific">Mus musculus</name>
    <name type="common">Mouse</name>
    <dbReference type="NCBI Taxonomy" id="10090"/>
    <lineage>
        <taxon>Eukaryota</taxon>
        <taxon>Metazoa</taxon>
        <taxon>Chordata</taxon>
        <taxon>Craniata</taxon>
        <taxon>Vertebrata</taxon>
        <taxon>Euteleostomi</taxon>
        <taxon>Mammalia</taxon>
        <taxon>Eutheria</taxon>
        <taxon>Euarchontoglires</taxon>
        <taxon>Glires</taxon>
        <taxon>Rodentia</taxon>
        <taxon>Myomorpha</taxon>
        <taxon>Muroidea</taxon>
        <taxon>Muridae</taxon>
        <taxon>Murinae</taxon>
        <taxon>Mus</taxon>
        <taxon>Mus</taxon>
    </lineage>
</organism>
<comment type="function">
    <text evidence="4">Ras proteins bind GDP/GTP and possess intrinsic GTPase activity. Plays an important role in the tumor-like growth properties of embryonic stem cells.</text>
</comment>
<comment type="catalytic activity">
    <reaction evidence="2">
        <text>GTP + H2O = GDP + phosphate + H(+)</text>
        <dbReference type="Rhea" id="RHEA:19669"/>
        <dbReference type="ChEBI" id="CHEBI:15377"/>
        <dbReference type="ChEBI" id="CHEBI:15378"/>
        <dbReference type="ChEBI" id="CHEBI:37565"/>
        <dbReference type="ChEBI" id="CHEBI:43474"/>
        <dbReference type="ChEBI" id="CHEBI:58189"/>
        <dbReference type="EC" id="3.6.5.2"/>
    </reaction>
</comment>
<comment type="activity regulation">
    <text>Alternates between an inactive form bound to GDP and an active form bound to GTP. Activated by a guanine nucleotide-exchange factor (GEF) and inactivated by a GTPase-activating protein (GAP).</text>
</comment>
<comment type="subunit">
    <text evidence="4">Interacts with PIK3CD.</text>
</comment>
<comment type="subcellular location">
    <subcellularLocation>
        <location evidence="1">Cell membrane</location>
        <topology evidence="1">Lipid-anchor</topology>
        <orientation evidence="1">Cytoplasmic side</orientation>
    </subcellularLocation>
</comment>
<comment type="tissue specificity">
    <text evidence="4">Expressed in several undifferentiated mouse embryonic stem cell lines.</text>
</comment>
<comment type="similarity">
    <text evidence="5">Belongs to the small GTPase superfamily. Ras family.</text>
</comment>
<feature type="chain" id="PRO_0000247540" description="GTPase ERas">
    <location>
        <begin position="1"/>
        <end position="224"/>
    </location>
</feature>
<feature type="propeptide" id="PRO_0000247541" description="Removed in mature form" evidence="1">
    <location>
        <begin position="225"/>
        <end position="227"/>
    </location>
</feature>
<feature type="region of interest" description="Disordered" evidence="3">
    <location>
        <begin position="1"/>
        <end position="25"/>
    </location>
</feature>
<feature type="short sequence motif" description="Effector region">
    <location>
        <begin position="70"/>
        <end position="78"/>
    </location>
</feature>
<feature type="compositionally biased region" description="Polar residues" evidence="3">
    <location>
        <begin position="1"/>
        <end position="19"/>
    </location>
</feature>
<feature type="binding site" evidence="1">
    <location>
        <begin position="48"/>
        <end position="55"/>
    </location>
    <ligand>
        <name>GTP</name>
        <dbReference type="ChEBI" id="CHEBI:37565"/>
    </ligand>
</feature>
<feature type="binding site" evidence="1">
    <location>
        <begin position="95"/>
        <end position="99"/>
    </location>
    <ligand>
        <name>GTP</name>
        <dbReference type="ChEBI" id="CHEBI:37565"/>
    </ligand>
</feature>
<feature type="binding site" evidence="1">
    <location>
        <begin position="151"/>
        <end position="154"/>
    </location>
    <ligand>
        <name>GTP</name>
        <dbReference type="ChEBI" id="CHEBI:37565"/>
    </ligand>
</feature>
<feature type="modified residue" description="Cysteine methyl ester" evidence="1">
    <location>
        <position position="224"/>
    </location>
</feature>
<feature type="lipid moiety-binding region" description="S-palmitoyl cysteine" evidence="1">
    <location>
        <position position="220"/>
    </location>
</feature>
<feature type="lipid moiety-binding region" description="S-palmitoyl cysteine" evidence="1">
    <location>
        <position position="222"/>
    </location>
</feature>
<feature type="lipid moiety-binding region" description="S-farnesyl cysteine" evidence="1">
    <location>
        <position position="224"/>
    </location>
</feature>
<name>RASE_MOUSE</name>
<protein>
    <recommendedName>
        <fullName>GTPase ERas</fullName>
        <shortName>E-Ras</shortName>
        <ecNumber evidence="2">3.6.5.2</ecNumber>
    </recommendedName>
    <alternativeName>
        <fullName>Embryonic stem cell-expressed Ras</fullName>
    </alternativeName>
</protein>
<keyword id="KW-1003">Cell membrane</keyword>
<keyword id="KW-0342">GTP-binding</keyword>
<keyword id="KW-0378">Hydrolase</keyword>
<keyword id="KW-0449">Lipoprotein</keyword>
<keyword id="KW-0472">Membrane</keyword>
<keyword id="KW-0488">Methylation</keyword>
<keyword id="KW-0547">Nucleotide-binding</keyword>
<keyword id="KW-0564">Palmitate</keyword>
<keyword id="KW-0636">Prenylation</keyword>
<keyword id="KW-1185">Reference proteome</keyword>